<reference key="1">
    <citation type="submission" date="2008-02" db="EMBL/GenBank/DDBJ databases">
        <title>Complete sequence of Shewanella woodyi ATCC 51908.</title>
        <authorList>
            <consortium name="US DOE Joint Genome Institute"/>
            <person name="Copeland A."/>
            <person name="Lucas S."/>
            <person name="Lapidus A."/>
            <person name="Glavina del Rio T."/>
            <person name="Dalin E."/>
            <person name="Tice H."/>
            <person name="Bruce D."/>
            <person name="Goodwin L."/>
            <person name="Pitluck S."/>
            <person name="Sims D."/>
            <person name="Brettin T."/>
            <person name="Detter J.C."/>
            <person name="Han C."/>
            <person name="Kuske C.R."/>
            <person name="Schmutz J."/>
            <person name="Larimer F."/>
            <person name="Land M."/>
            <person name="Hauser L."/>
            <person name="Kyrpides N."/>
            <person name="Lykidis A."/>
            <person name="Zhao J.-S."/>
            <person name="Richardson P."/>
        </authorList>
    </citation>
    <scope>NUCLEOTIDE SEQUENCE [LARGE SCALE GENOMIC DNA]</scope>
    <source>
        <strain>ATCC 51908 / MS32</strain>
    </source>
</reference>
<comment type="catalytic activity">
    <reaction evidence="1">
        <text>S-adenosyl-L-methionine + a thiopurine = S-adenosyl-L-homocysteine + a thiopurine S-methylether.</text>
        <dbReference type="EC" id="2.1.1.67"/>
    </reaction>
</comment>
<comment type="subcellular location">
    <subcellularLocation>
        <location evidence="1">Cytoplasm</location>
    </subcellularLocation>
</comment>
<comment type="similarity">
    <text evidence="1">Belongs to the class I-like SAM-binding methyltransferase superfamily. TPMT family.</text>
</comment>
<evidence type="ECO:0000255" key="1">
    <source>
        <dbReference type="HAMAP-Rule" id="MF_00812"/>
    </source>
</evidence>
<protein>
    <recommendedName>
        <fullName evidence="1">Thiopurine S-methyltransferase</fullName>
        <ecNumber evidence="1">2.1.1.67</ecNumber>
    </recommendedName>
    <alternativeName>
        <fullName evidence="1">Thiopurine methyltransferase</fullName>
    </alternativeName>
</protein>
<sequence>MEPDFWHSKWNAEQIGFHLNEVNPLLIKYWPALDLAPNSQVFVPLCGKSLDLCYLAELGHKVVGCELNQTAVEQFFAENSLPHLMTPAKESISELNRFDASDITLYQGDLFSLTPEELSGVDAFYDRAALIAWPESMRLAYVEKLIELLPPKSMGLLVTLDYPQEALKGPPFAVSNDWVMANMADYFELELLSSEDVLNENPRFVNKQVPWLTESVYQLKRRG</sequence>
<keyword id="KW-0963">Cytoplasm</keyword>
<keyword id="KW-0489">Methyltransferase</keyword>
<keyword id="KW-1185">Reference proteome</keyword>
<keyword id="KW-0949">S-adenosyl-L-methionine</keyword>
<keyword id="KW-0808">Transferase</keyword>
<accession>B1KHT1</accession>
<feature type="chain" id="PRO_1000134081" description="Thiopurine S-methyltransferase">
    <location>
        <begin position="1"/>
        <end position="223"/>
    </location>
</feature>
<feature type="binding site" evidence="1">
    <location>
        <position position="10"/>
    </location>
    <ligand>
        <name>S-adenosyl-L-methionine</name>
        <dbReference type="ChEBI" id="CHEBI:59789"/>
    </ligand>
</feature>
<feature type="binding site" evidence="1">
    <location>
        <position position="45"/>
    </location>
    <ligand>
        <name>S-adenosyl-L-methionine</name>
        <dbReference type="ChEBI" id="CHEBI:59789"/>
    </ligand>
</feature>
<feature type="binding site" evidence="1">
    <location>
        <position position="66"/>
    </location>
    <ligand>
        <name>S-adenosyl-L-methionine</name>
        <dbReference type="ChEBI" id="CHEBI:59789"/>
    </ligand>
</feature>
<feature type="binding site" evidence="1">
    <location>
        <position position="127"/>
    </location>
    <ligand>
        <name>S-adenosyl-L-methionine</name>
        <dbReference type="ChEBI" id="CHEBI:59789"/>
    </ligand>
</feature>
<organism>
    <name type="scientific">Shewanella woodyi (strain ATCC 51908 / MS32)</name>
    <dbReference type="NCBI Taxonomy" id="392500"/>
    <lineage>
        <taxon>Bacteria</taxon>
        <taxon>Pseudomonadati</taxon>
        <taxon>Pseudomonadota</taxon>
        <taxon>Gammaproteobacteria</taxon>
        <taxon>Alteromonadales</taxon>
        <taxon>Shewanellaceae</taxon>
        <taxon>Shewanella</taxon>
    </lineage>
</organism>
<gene>
    <name evidence="1" type="primary">tpm</name>
    <name type="ordered locus">Swoo_4153</name>
</gene>
<dbReference type="EC" id="2.1.1.67" evidence="1"/>
<dbReference type="EMBL" id="CP000961">
    <property type="protein sequence ID" value="ACA88409.1"/>
    <property type="molecule type" value="Genomic_DNA"/>
</dbReference>
<dbReference type="RefSeq" id="WP_012326738.1">
    <property type="nucleotide sequence ID" value="NC_010506.1"/>
</dbReference>
<dbReference type="SMR" id="B1KHT1"/>
<dbReference type="STRING" id="392500.Swoo_4153"/>
<dbReference type="KEGG" id="swd:Swoo_4153"/>
<dbReference type="eggNOG" id="COG0500">
    <property type="taxonomic scope" value="Bacteria"/>
</dbReference>
<dbReference type="HOGENOM" id="CLU_085515_1_0_6"/>
<dbReference type="Proteomes" id="UP000002168">
    <property type="component" value="Chromosome"/>
</dbReference>
<dbReference type="GO" id="GO:0005737">
    <property type="term" value="C:cytoplasm"/>
    <property type="evidence" value="ECO:0007669"/>
    <property type="project" value="UniProtKB-SubCell"/>
</dbReference>
<dbReference type="GO" id="GO:0008119">
    <property type="term" value="F:thiopurine S-methyltransferase activity"/>
    <property type="evidence" value="ECO:0007669"/>
    <property type="project" value="UniProtKB-UniRule"/>
</dbReference>
<dbReference type="GO" id="GO:0032259">
    <property type="term" value="P:methylation"/>
    <property type="evidence" value="ECO:0007669"/>
    <property type="project" value="UniProtKB-KW"/>
</dbReference>
<dbReference type="GO" id="GO:0010038">
    <property type="term" value="P:response to metal ion"/>
    <property type="evidence" value="ECO:0007669"/>
    <property type="project" value="InterPro"/>
</dbReference>
<dbReference type="FunFam" id="3.40.50.150:FF:000101">
    <property type="entry name" value="Thiopurine S-methyltransferase"/>
    <property type="match status" value="1"/>
</dbReference>
<dbReference type="Gene3D" id="3.40.50.150">
    <property type="entry name" value="Vaccinia Virus protein VP39"/>
    <property type="match status" value="1"/>
</dbReference>
<dbReference type="HAMAP" id="MF_00812">
    <property type="entry name" value="Thiopur_methtran"/>
    <property type="match status" value="1"/>
</dbReference>
<dbReference type="InterPro" id="IPR029063">
    <property type="entry name" value="SAM-dependent_MTases_sf"/>
</dbReference>
<dbReference type="InterPro" id="IPR022474">
    <property type="entry name" value="Thiopur_S-MeTfrase_Se/Te_detox"/>
</dbReference>
<dbReference type="InterPro" id="IPR025835">
    <property type="entry name" value="Thiopurine_S-MeTrfase"/>
</dbReference>
<dbReference type="InterPro" id="IPR008854">
    <property type="entry name" value="TPMT"/>
</dbReference>
<dbReference type="NCBIfam" id="NF009732">
    <property type="entry name" value="PRK13255.1"/>
    <property type="match status" value="1"/>
</dbReference>
<dbReference type="NCBIfam" id="TIGR03840">
    <property type="entry name" value="TMPT_Se_Te"/>
    <property type="match status" value="1"/>
</dbReference>
<dbReference type="PANTHER" id="PTHR10259">
    <property type="entry name" value="THIOPURINE S-METHYLTRANSFERASE"/>
    <property type="match status" value="1"/>
</dbReference>
<dbReference type="PANTHER" id="PTHR10259:SF11">
    <property type="entry name" value="THIOPURINE S-METHYLTRANSFERASE"/>
    <property type="match status" value="1"/>
</dbReference>
<dbReference type="Pfam" id="PF05724">
    <property type="entry name" value="TPMT"/>
    <property type="match status" value="1"/>
</dbReference>
<dbReference type="PIRSF" id="PIRSF023956">
    <property type="entry name" value="Thiopurine_S-methyltransferase"/>
    <property type="match status" value="1"/>
</dbReference>
<dbReference type="SUPFAM" id="SSF53335">
    <property type="entry name" value="S-adenosyl-L-methionine-dependent methyltransferases"/>
    <property type="match status" value="1"/>
</dbReference>
<dbReference type="PROSITE" id="PS51585">
    <property type="entry name" value="SAM_MT_TPMT"/>
    <property type="match status" value="1"/>
</dbReference>
<name>TPMT_SHEWM</name>
<proteinExistence type="inferred from homology"/>